<accession>B5F052</accession>
<gene>
    <name evidence="1" type="primary">galK</name>
    <name type="ordered locus">SeAg_B0810</name>
</gene>
<protein>
    <recommendedName>
        <fullName evidence="1">Galactokinase</fullName>
        <ecNumber evidence="1">2.7.1.6</ecNumber>
    </recommendedName>
    <alternativeName>
        <fullName evidence="1">Galactose kinase</fullName>
    </alternativeName>
</protein>
<comment type="function">
    <text evidence="1">Catalyzes the transfer of the gamma-phosphate of ATP to D-galactose to form alpha-D-galactose-1-phosphate (Gal-1-P).</text>
</comment>
<comment type="catalytic activity">
    <reaction evidence="1">
        <text>alpha-D-galactose + ATP = alpha-D-galactose 1-phosphate + ADP + H(+)</text>
        <dbReference type="Rhea" id="RHEA:13553"/>
        <dbReference type="ChEBI" id="CHEBI:15378"/>
        <dbReference type="ChEBI" id="CHEBI:28061"/>
        <dbReference type="ChEBI" id="CHEBI:30616"/>
        <dbReference type="ChEBI" id="CHEBI:58336"/>
        <dbReference type="ChEBI" id="CHEBI:456216"/>
        <dbReference type="EC" id="2.7.1.6"/>
    </reaction>
</comment>
<comment type="pathway">
    <text evidence="1">Carbohydrate metabolism; galactose metabolism.</text>
</comment>
<comment type="subcellular location">
    <subcellularLocation>
        <location evidence="1">Cytoplasm</location>
    </subcellularLocation>
</comment>
<comment type="similarity">
    <text evidence="1">Belongs to the GHMP kinase family. GalK subfamily.</text>
</comment>
<proteinExistence type="inferred from homology"/>
<keyword id="KW-0067">ATP-binding</keyword>
<keyword id="KW-0119">Carbohydrate metabolism</keyword>
<keyword id="KW-0963">Cytoplasm</keyword>
<keyword id="KW-0299">Galactose metabolism</keyword>
<keyword id="KW-0418">Kinase</keyword>
<keyword id="KW-0460">Magnesium</keyword>
<keyword id="KW-0479">Metal-binding</keyword>
<keyword id="KW-0547">Nucleotide-binding</keyword>
<keyword id="KW-0808">Transferase</keyword>
<organism>
    <name type="scientific">Salmonella agona (strain SL483)</name>
    <dbReference type="NCBI Taxonomy" id="454166"/>
    <lineage>
        <taxon>Bacteria</taxon>
        <taxon>Pseudomonadati</taxon>
        <taxon>Pseudomonadota</taxon>
        <taxon>Gammaproteobacteria</taxon>
        <taxon>Enterobacterales</taxon>
        <taxon>Enterobacteriaceae</taxon>
        <taxon>Salmonella</taxon>
    </lineage>
</organism>
<reference key="1">
    <citation type="journal article" date="2011" name="J. Bacteriol.">
        <title>Comparative genomics of 28 Salmonella enterica isolates: evidence for CRISPR-mediated adaptive sublineage evolution.</title>
        <authorList>
            <person name="Fricke W.F."/>
            <person name="Mammel M.K."/>
            <person name="McDermott P.F."/>
            <person name="Tartera C."/>
            <person name="White D.G."/>
            <person name="Leclerc J.E."/>
            <person name="Ravel J."/>
            <person name="Cebula T.A."/>
        </authorList>
    </citation>
    <scope>NUCLEOTIDE SEQUENCE [LARGE SCALE GENOMIC DNA]</scope>
    <source>
        <strain>SL483</strain>
    </source>
</reference>
<name>GAL1_SALA4</name>
<sequence length="382" mass="41260">MNLKEKTRALFAEIFGYPATHTIQAPGRVNLIGEHTDYNDGFVLPCAIDYQTVISCAPRDDRTVRVIAADYDNQLDEFSLDAPIVTHDSQQWSNYVRGVVKHLQQRNNAFGGVDMVISGNVPQGAGLSSSASLEVAVGTVFQQLYHLPLDGAQIALNGQEAENQFVGCNCGIMDQLISALGKKDHALLIDCRTLGAKAVSMPKGVAVVIINSNFKRTLVGSEYNTRREQCETGARFFQQPALRDVSLEAFNAVASELDPVVAKRVRHVLSENARTVEAASALEKGDLQRMGQLMAESHASMRDDFEITVPQIDTLVDIVKATIGDQGGVRMTGGGFGGCVVALIPEDLVPAVQQAVAQQYEAKTGIKETFYVCKPSQGAGQC</sequence>
<dbReference type="EC" id="2.7.1.6" evidence="1"/>
<dbReference type="EMBL" id="CP001138">
    <property type="protein sequence ID" value="ACH51618.1"/>
    <property type="molecule type" value="Genomic_DNA"/>
</dbReference>
<dbReference type="RefSeq" id="WP_001049357.1">
    <property type="nucleotide sequence ID" value="NC_011149.1"/>
</dbReference>
<dbReference type="SMR" id="B5F052"/>
<dbReference type="KEGG" id="sea:SeAg_B0810"/>
<dbReference type="HOGENOM" id="CLU_017814_2_1_6"/>
<dbReference type="UniPathway" id="UPA00214"/>
<dbReference type="Proteomes" id="UP000008819">
    <property type="component" value="Chromosome"/>
</dbReference>
<dbReference type="GO" id="GO:0005829">
    <property type="term" value="C:cytosol"/>
    <property type="evidence" value="ECO:0007669"/>
    <property type="project" value="TreeGrafter"/>
</dbReference>
<dbReference type="GO" id="GO:0005524">
    <property type="term" value="F:ATP binding"/>
    <property type="evidence" value="ECO:0007669"/>
    <property type="project" value="UniProtKB-UniRule"/>
</dbReference>
<dbReference type="GO" id="GO:0004335">
    <property type="term" value="F:galactokinase activity"/>
    <property type="evidence" value="ECO:0007669"/>
    <property type="project" value="UniProtKB-UniRule"/>
</dbReference>
<dbReference type="GO" id="GO:0000287">
    <property type="term" value="F:magnesium ion binding"/>
    <property type="evidence" value="ECO:0007669"/>
    <property type="project" value="UniProtKB-UniRule"/>
</dbReference>
<dbReference type="GO" id="GO:0006012">
    <property type="term" value="P:galactose metabolic process"/>
    <property type="evidence" value="ECO:0007669"/>
    <property type="project" value="UniProtKB-UniRule"/>
</dbReference>
<dbReference type="FunFam" id="3.30.230.10:FF:000017">
    <property type="entry name" value="Galactokinase"/>
    <property type="match status" value="1"/>
</dbReference>
<dbReference type="FunFam" id="3.30.70.890:FF:000001">
    <property type="entry name" value="Galactokinase"/>
    <property type="match status" value="1"/>
</dbReference>
<dbReference type="Gene3D" id="3.30.230.10">
    <property type="match status" value="1"/>
</dbReference>
<dbReference type="Gene3D" id="3.30.70.890">
    <property type="entry name" value="GHMP kinase, C-terminal domain"/>
    <property type="match status" value="1"/>
</dbReference>
<dbReference type="HAMAP" id="MF_00246">
    <property type="entry name" value="Galactokinase"/>
    <property type="match status" value="1"/>
</dbReference>
<dbReference type="InterPro" id="IPR000705">
    <property type="entry name" value="Galactokinase"/>
</dbReference>
<dbReference type="InterPro" id="IPR022963">
    <property type="entry name" value="Galactokinase_bac"/>
</dbReference>
<dbReference type="InterPro" id="IPR019741">
    <property type="entry name" value="Galactokinase_CS"/>
</dbReference>
<dbReference type="InterPro" id="IPR019539">
    <property type="entry name" value="GalKase_N"/>
</dbReference>
<dbReference type="InterPro" id="IPR013750">
    <property type="entry name" value="GHMP_kinase_C_dom"/>
</dbReference>
<dbReference type="InterPro" id="IPR036554">
    <property type="entry name" value="GHMP_kinase_C_sf"/>
</dbReference>
<dbReference type="InterPro" id="IPR006204">
    <property type="entry name" value="GHMP_kinase_N_dom"/>
</dbReference>
<dbReference type="InterPro" id="IPR006203">
    <property type="entry name" value="GHMP_knse_ATP-bd_CS"/>
</dbReference>
<dbReference type="InterPro" id="IPR006206">
    <property type="entry name" value="Mevalonate/galactokinase"/>
</dbReference>
<dbReference type="InterPro" id="IPR020568">
    <property type="entry name" value="Ribosomal_Su5_D2-typ_SF"/>
</dbReference>
<dbReference type="InterPro" id="IPR014721">
    <property type="entry name" value="Ribsml_uS5_D2-typ_fold_subgr"/>
</dbReference>
<dbReference type="NCBIfam" id="TIGR00131">
    <property type="entry name" value="gal_kin"/>
    <property type="match status" value="1"/>
</dbReference>
<dbReference type="NCBIfam" id="NF003472">
    <property type="entry name" value="PRK05101.1"/>
    <property type="match status" value="1"/>
</dbReference>
<dbReference type="PANTHER" id="PTHR10457:SF7">
    <property type="entry name" value="GALACTOKINASE-RELATED"/>
    <property type="match status" value="1"/>
</dbReference>
<dbReference type="PANTHER" id="PTHR10457">
    <property type="entry name" value="MEVALONATE KINASE/GALACTOKINASE"/>
    <property type="match status" value="1"/>
</dbReference>
<dbReference type="Pfam" id="PF10509">
    <property type="entry name" value="GalKase_gal_bdg"/>
    <property type="match status" value="1"/>
</dbReference>
<dbReference type="Pfam" id="PF08544">
    <property type="entry name" value="GHMP_kinases_C"/>
    <property type="match status" value="1"/>
</dbReference>
<dbReference type="Pfam" id="PF00288">
    <property type="entry name" value="GHMP_kinases_N"/>
    <property type="match status" value="1"/>
</dbReference>
<dbReference type="PIRSF" id="PIRSF000530">
    <property type="entry name" value="Galactokinase"/>
    <property type="match status" value="1"/>
</dbReference>
<dbReference type="PRINTS" id="PR00473">
    <property type="entry name" value="GALCTOKINASE"/>
</dbReference>
<dbReference type="PRINTS" id="PR00959">
    <property type="entry name" value="MEVGALKINASE"/>
</dbReference>
<dbReference type="SUPFAM" id="SSF55060">
    <property type="entry name" value="GHMP Kinase, C-terminal domain"/>
    <property type="match status" value="1"/>
</dbReference>
<dbReference type="SUPFAM" id="SSF54211">
    <property type="entry name" value="Ribosomal protein S5 domain 2-like"/>
    <property type="match status" value="1"/>
</dbReference>
<dbReference type="PROSITE" id="PS00106">
    <property type="entry name" value="GALACTOKINASE"/>
    <property type="match status" value="1"/>
</dbReference>
<dbReference type="PROSITE" id="PS00627">
    <property type="entry name" value="GHMP_KINASES_ATP"/>
    <property type="match status" value="1"/>
</dbReference>
<feature type="chain" id="PRO_1000100838" description="Galactokinase">
    <location>
        <begin position="1"/>
        <end position="382"/>
    </location>
</feature>
<feature type="active site" description="Proton acceptor" evidence="1">
    <location>
        <position position="174"/>
    </location>
</feature>
<feature type="binding site" evidence="1">
    <location>
        <begin position="34"/>
        <end position="37"/>
    </location>
    <ligand>
        <name>substrate</name>
    </ligand>
</feature>
<feature type="binding site" evidence="1">
    <location>
        <begin position="124"/>
        <end position="130"/>
    </location>
    <ligand>
        <name>ATP</name>
        <dbReference type="ChEBI" id="CHEBI:30616"/>
    </ligand>
</feature>
<feature type="binding site" evidence="1">
    <location>
        <position position="130"/>
    </location>
    <ligand>
        <name>Mg(2+)</name>
        <dbReference type="ChEBI" id="CHEBI:18420"/>
    </ligand>
</feature>
<feature type="binding site" evidence="1">
    <location>
        <position position="162"/>
    </location>
    <ligand>
        <name>Mg(2+)</name>
        <dbReference type="ChEBI" id="CHEBI:18420"/>
    </ligand>
</feature>
<feature type="binding site" evidence="1">
    <location>
        <position position="223"/>
    </location>
    <ligand>
        <name>substrate</name>
    </ligand>
</feature>
<feature type="site" description="Transition state stabilizer" evidence="1">
    <location>
        <position position="28"/>
    </location>
</feature>
<evidence type="ECO:0000255" key="1">
    <source>
        <dbReference type="HAMAP-Rule" id="MF_00246"/>
    </source>
</evidence>